<reference key="1">
    <citation type="journal article" date="2010" name="Zoology">
        <title>Transcriptome analysis of the venom glands of the Chinese wolf spider Lycosa singoriensis.</title>
        <authorList>
            <person name="Zhang Y."/>
            <person name="Chen J."/>
            <person name="Tang X."/>
            <person name="Wang F."/>
            <person name="Jiang L."/>
            <person name="Xiong X."/>
            <person name="Wang M."/>
            <person name="Rong M."/>
            <person name="Liu Z."/>
            <person name="Liang S."/>
        </authorList>
    </citation>
    <scope>NUCLEOTIDE SEQUENCE [LARGE SCALE MRNA]</scope>
    <source>
        <tissue>Venom gland</tissue>
    </source>
</reference>
<proteinExistence type="evidence at transcript level"/>
<organism>
    <name type="scientific">Lycosa singoriensis</name>
    <name type="common">Wolf spider</name>
    <name type="synonym">Aranea singoriensis</name>
    <dbReference type="NCBI Taxonomy" id="434756"/>
    <lineage>
        <taxon>Eukaryota</taxon>
        <taxon>Metazoa</taxon>
        <taxon>Ecdysozoa</taxon>
        <taxon>Arthropoda</taxon>
        <taxon>Chelicerata</taxon>
        <taxon>Arachnida</taxon>
        <taxon>Araneae</taxon>
        <taxon>Araneomorphae</taxon>
        <taxon>Entelegynae</taxon>
        <taxon>Lycosoidea</taxon>
        <taxon>Lycosidae</taxon>
        <taxon>Lycosa</taxon>
    </lineage>
</organism>
<protein>
    <recommendedName>
        <fullName>U3-lycotoxin-Ls1a</fullName>
    </recommendedName>
    <alternativeName>
        <fullName>Toxin-like structure LSTX-B20</fullName>
    </alternativeName>
</protein>
<name>TX320_LYCSI</name>
<sequence length="115" mass="13260">MKFVLLFGVFLVTLFSYSSAEMLDDFGQADEDELLSLIEKEEARAKECTPRFYDCSHDRHSCCRSELFKDVCTCFYPEGGDNEVCTCQQPKHLKYMEKAADKAKKFGGKIKKWFG</sequence>
<comment type="subcellular location">
    <subcellularLocation>
        <location evidence="1">Secreted</location>
    </subcellularLocation>
</comment>
<comment type="tissue specificity">
    <text>Expressed by the venom gland.</text>
</comment>
<comment type="domain">
    <text evidence="1">The presence of a 'disulfide through disulfide knot' structurally defines this protein as a knottin.</text>
</comment>
<comment type="similarity">
    <text evidence="3">Belongs to the neurotoxin 19 (CSTX) family. 01 subfamily.</text>
</comment>
<dbReference type="EMBL" id="EU925999">
    <property type="protein sequence ID" value="ACI41331.1"/>
    <property type="molecule type" value="mRNA"/>
</dbReference>
<dbReference type="EMBL" id="FM864003">
    <property type="protein sequence ID" value="CAS03601.1"/>
    <property type="molecule type" value="mRNA"/>
</dbReference>
<dbReference type="SMR" id="B6DCR5"/>
<dbReference type="ArachnoServer" id="AS000938">
    <property type="toxin name" value="U3-lycotoxin-Ls1a"/>
</dbReference>
<dbReference type="GO" id="GO:0005576">
    <property type="term" value="C:extracellular region"/>
    <property type="evidence" value="ECO:0007669"/>
    <property type="project" value="UniProtKB-SubCell"/>
</dbReference>
<dbReference type="GO" id="GO:0090729">
    <property type="term" value="F:toxin activity"/>
    <property type="evidence" value="ECO:0007669"/>
    <property type="project" value="UniProtKB-KW"/>
</dbReference>
<dbReference type="InterPro" id="IPR019553">
    <property type="entry name" value="Spider_toxin_CSTX_knottin"/>
</dbReference>
<dbReference type="InterPro" id="IPR011142">
    <property type="entry name" value="Spider_toxin_CSTX_Knottin_CS"/>
</dbReference>
<dbReference type="Pfam" id="PF10530">
    <property type="entry name" value="Toxin_35"/>
    <property type="match status" value="1"/>
</dbReference>
<dbReference type="PROSITE" id="PS60029">
    <property type="entry name" value="SPIDER_CSTX"/>
    <property type="match status" value="1"/>
</dbReference>
<accession>B6DCR5</accession>
<keyword id="KW-1015">Disulfide bond</keyword>
<keyword id="KW-0960">Knottin</keyword>
<keyword id="KW-0964">Secreted</keyword>
<keyword id="KW-0732">Signal</keyword>
<keyword id="KW-0800">Toxin</keyword>
<evidence type="ECO:0000250" key="1"/>
<evidence type="ECO:0000255" key="2"/>
<evidence type="ECO:0000305" key="3"/>
<feature type="signal peptide" evidence="2">
    <location>
        <begin position="1"/>
        <end position="20"/>
    </location>
</feature>
<feature type="propeptide" id="PRO_0000401645" evidence="1">
    <location>
        <begin position="21"/>
        <end position="44"/>
    </location>
</feature>
<feature type="chain" id="PRO_0000401646" description="U3-lycotoxin-Ls1a">
    <location>
        <begin position="45"/>
        <end position="115"/>
    </location>
</feature>
<feature type="disulfide bond" evidence="1">
    <location>
        <begin position="48"/>
        <end position="63"/>
    </location>
</feature>
<feature type="disulfide bond" evidence="1">
    <location>
        <begin position="55"/>
        <end position="72"/>
    </location>
</feature>
<feature type="disulfide bond" evidence="1">
    <location>
        <begin position="62"/>
        <end position="87"/>
    </location>
</feature>
<feature type="disulfide bond" evidence="1">
    <location>
        <begin position="74"/>
        <end position="85"/>
    </location>
</feature>